<protein>
    <recommendedName>
        <fullName>Scarecrow-like protein 13</fullName>
        <shortName>AtSCL13</shortName>
    </recommendedName>
    <alternativeName>
        <fullName>GRAS family protein 24</fullName>
        <shortName>AtGRAS-24</shortName>
    </alternativeName>
</protein>
<gene>
    <name type="primary">SCL13</name>
    <name type="ordered locus">At4g17230</name>
    <name type="ORF">dl4650c</name>
    <name type="ORF">FCAALL.225</name>
</gene>
<comment type="function">
    <text evidence="4">Probable transcription factor that acts as a positive regulator of continuous red light signals downstream of phytochrome B (phyB). Required for the regulation of hypocotyl elongation during de-etiolation. May be required to modulate phytochrome A (phyA) signal transduction in a phyB-independent way.</text>
</comment>
<comment type="subcellular location">
    <subcellularLocation>
        <location evidence="4">Cytoplasm</location>
    </subcellularLocation>
    <subcellularLocation>
        <location evidence="4">Nucleus</location>
    </subcellularLocation>
    <text>Mainly cytoplasmic.</text>
</comment>
<comment type="tissue specificity">
    <text evidence="3 4 5">Expressed in roots, hypocotyls, cotyledons, shoot apex, leaves, flowers and siliques.</text>
</comment>
<comment type="developmental stage">
    <text evidence="4">During development, higher expression levels are detected in young rosette leaves, senescing leaves and petals and sepals at flower stage 15.</text>
</comment>
<comment type="induction">
    <text evidence="4">By osmotic and cold stresses, and UV-A/B.</text>
</comment>
<comment type="similarity">
    <text evidence="6">Belongs to the GRAS family.</text>
</comment>
<comment type="sequence caution" evidence="6">
    <conflict type="erroneous termination">
        <sequence resource="EMBL-CDS" id="AAD24411"/>
    </conflict>
    <text>Extended C-terminus.</text>
</comment>
<comment type="sequence caution" evidence="6">
    <conflict type="erroneous gene model prediction">
        <sequence resource="EMBL-CDS" id="CAB10504"/>
    </conflict>
</comment>
<comment type="sequence caution" evidence="6">
    <conflict type="frameshift">
        <sequence resource="EMBL-CDS" id="CAB10504"/>
    </conflict>
</comment>
<comment type="sequence caution" evidence="6">
    <conflict type="erroneous gene model prediction">
        <sequence resource="EMBL-CDS" id="CAB78726"/>
    </conflict>
</comment>
<comment type="sequence caution" evidence="6">
    <conflict type="frameshift">
        <sequence resource="EMBL-CDS" id="CAB78726"/>
    </conflict>
</comment>
<organism>
    <name type="scientific">Arabidopsis thaliana</name>
    <name type="common">Mouse-ear cress</name>
    <dbReference type="NCBI Taxonomy" id="3702"/>
    <lineage>
        <taxon>Eukaryota</taxon>
        <taxon>Viridiplantae</taxon>
        <taxon>Streptophyta</taxon>
        <taxon>Embryophyta</taxon>
        <taxon>Tracheophyta</taxon>
        <taxon>Spermatophyta</taxon>
        <taxon>Magnoliopsida</taxon>
        <taxon>eudicotyledons</taxon>
        <taxon>Gunneridae</taxon>
        <taxon>Pentapetalae</taxon>
        <taxon>rosids</taxon>
        <taxon>malvids</taxon>
        <taxon>Brassicales</taxon>
        <taxon>Brassicaceae</taxon>
        <taxon>Camelineae</taxon>
        <taxon>Arabidopsis</taxon>
    </lineage>
</organism>
<feature type="chain" id="PRO_0000350855" description="Scarecrow-like protein 13">
    <location>
        <begin position="1"/>
        <end position="529"/>
    </location>
</feature>
<feature type="domain" description="GRAS" evidence="1">
    <location>
        <begin position="146"/>
        <end position="525"/>
    </location>
</feature>
<feature type="region of interest" description="Disordered" evidence="2">
    <location>
        <begin position="51"/>
        <end position="84"/>
    </location>
</feature>
<feature type="region of interest" description="Leucine repeat I (LRI)" evidence="1">
    <location>
        <begin position="153"/>
        <end position="213"/>
    </location>
</feature>
<feature type="region of interest" description="VHIID" evidence="1">
    <location>
        <begin position="232"/>
        <end position="297"/>
    </location>
</feature>
<feature type="region of interest" description="Leucine repeat II (LRII)" evidence="1">
    <location>
        <begin position="313"/>
        <end position="345"/>
    </location>
</feature>
<feature type="region of interest" description="PFYRE" evidence="1">
    <location>
        <begin position="354"/>
        <end position="448"/>
    </location>
</feature>
<feature type="region of interest" description="SAW" evidence="1">
    <location>
        <begin position="451"/>
        <end position="525"/>
    </location>
</feature>
<feature type="short sequence motif" description="VHIID" evidence="1">
    <location>
        <begin position="263"/>
        <end position="267"/>
    </location>
</feature>
<feature type="compositionally biased region" description="Polar residues" evidence="2">
    <location>
        <begin position="51"/>
        <end position="81"/>
    </location>
</feature>
<feature type="sequence conflict" description="In Ref. 4; AAL31902/AAN46855." evidence="6" ref="4">
    <original>R</original>
    <variation>Q</variation>
    <location>
        <position position="69"/>
    </location>
</feature>
<feature type="sequence conflict" description="In Ref. 6; AAD24411." evidence="6" ref="6">
    <original>NH</original>
    <variation>KY</variation>
    <location>
        <begin position="374"/>
        <end position="375"/>
    </location>
</feature>
<feature type="sequence conflict" description="In Ref. 6; AAD24411." evidence="6" ref="6">
    <original>FL</original>
    <variation>LV</variation>
    <location>
        <begin position="405"/>
        <end position="406"/>
    </location>
</feature>
<feature type="sequence conflict" description="In Ref. 3; AEE83865." evidence="6" ref="3">
    <original>K</original>
    <variation>I</variation>
    <location>
        <position position="466"/>
    </location>
</feature>
<dbReference type="EMBL" id="Z97343">
    <property type="protein sequence ID" value="CAB10504.1"/>
    <property type="status" value="ALT_SEQ"/>
    <property type="molecule type" value="Genomic_DNA"/>
</dbReference>
<dbReference type="EMBL" id="AL161546">
    <property type="protein sequence ID" value="CAB78726.1"/>
    <property type="status" value="ALT_SEQ"/>
    <property type="molecule type" value="Genomic_DNA"/>
</dbReference>
<dbReference type="EMBL" id="CP002687">
    <property type="protein sequence ID" value="AEE83865.1"/>
    <property type="molecule type" value="Genomic_DNA"/>
</dbReference>
<dbReference type="EMBL" id="AF419570">
    <property type="protein sequence ID" value="AAL31902.1"/>
    <property type="molecule type" value="mRNA"/>
</dbReference>
<dbReference type="EMBL" id="BT001076">
    <property type="protein sequence ID" value="AAN46855.1"/>
    <property type="molecule type" value="mRNA"/>
</dbReference>
<dbReference type="EMBL" id="AK226549">
    <property type="status" value="NOT_ANNOTATED_CDS"/>
    <property type="molecule type" value="mRNA"/>
</dbReference>
<dbReference type="EMBL" id="AF036308">
    <property type="protein sequence ID" value="AAD24411.1"/>
    <property type="status" value="ALT_SEQ"/>
    <property type="molecule type" value="mRNA"/>
</dbReference>
<dbReference type="PIR" id="C71441">
    <property type="entry name" value="C71441"/>
</dbReference>
<dbReference type="PIR" id="T51241">
    <property type="entry name" value="T51241"/>
</dbReference>
<dbReference type="RefSeq" id="NP_001328648.1">
    <property type="nucleotide sequence ID" value="NM_001341195.1"/>
</dbReference>
<dbReference type="RefSeq" id="NP_193456.4">
    <property type="nucleotide sequence ID" value="NM_117828.8"/>
</dbReference>
<dbReference type="SMR" id="Q9M0M5"/>
<dbReference type="BioGRID" id="12728">
    <property type="interactions" value="2"/>
</dbReference>
<dbReference type="FunCoup" id="Q9M0M5">
    <property type="interactions" value="20"/>
</dbReference>
<dbReference type="STRING" id="3702.Q9M0M5"/>
<dbReference type="PaxDb" id="3702-AT4G17230.1"/>
<dbReference type="ProteomicsDB" id="232909"/>
<dbReference type="GeneID" id="827435"/>
<dbReference type="KEGG" id="ath:AT4G17230"/>
<dbReference type="Araport" id="AT4G17230"/>
<dbReference type="TAIR" id="AT4G17230">
    <property type="gene designation" value="SCL13"/>
</dbReference>
<dbReference type="eggNOG" id="ENOG502QS02">
    <property type="taxonomic scope" value="Eukaryota"/>
</dbReference>
<dbReference type="HOGENOM" id="CLU_011924_6_0_1"/>
<dbReference type="InParanoid" id="Q9M0M5"/>
<dbReference type="PRO" id="PR:Q9M0M5"/>
<dbReference type="Proteomes" id="UP000006548">
    <property type="component" value="Chromosome 4"/>
</dbReference>
<dbReference type="ExpressionAtlas" id="Q9M0M5">
    <property type="expression patterns" value="baseline and differential"/>
</dbReference>
<dbReference type="GO" id="GO:0005737">
    <property type="term" value="C:cytoplasm"/>
    <property type="evidence" value="ECO:0007669"/>
    <property type="project" value="UniProtKB-SubCell"/>
</dbReference>
<dbReference type="GO" id="GO:0005634">
    <property type="term" value="C:nucleus"/>
    <property type="evidence" value="ECO:0000318"/>
    <property type="project" value="GO_Central"/>
</dbReference>
<dbReference type="GO" id="GO:0003700">
    <property type="term" value="F:DNA-binding transcription factor activity"/>
    <property type="evidence" value="ECO:0000318"/>
    <property type="project" value="GO_Central"/>
</dbReference>
<dbReference type="GO" id="GO:0043565">
    <property type="term" value="F:sequence-specific DNA binding"/>
    <property type="evidence" value="ECO:0000318"/>
    <property type="project" value="GO_Central"/>
</dbReference>
<dbReference type="GO" id="GO:0006355">
    <property type="term" value="P:regulation of DNA-templated transcription"/>
    <property type="evidence" value="ECO:0000318"/>
    <property type="project" value="GO_Central"/>
</dbReference>
<dbReference type="InterPro" id="IPR005202">
    <property type="entry name" value="TF_GRAS"/>
</dbReference>
<dbReference type="PANTHER" id="PTHR31636">
    <property type="entry name" value="OSJNBA0084A10.13 PROTEIN-RELATED"/>
    <property type="match status" value="1"/>
</dbReference>
<dbReference type="Pfam" id="PF03514">
    <property type="entry name" value="GRAS"/>
    <property type="match status" value="1"/>
</dbReference>
<dbReference type="PROSITE" id="PS50985">
    <property type="entry name" value="GRAS"/>
    <property type="match status" value="1"/>
</dbReference>
<proteinExistence type="evidence at transcript level"/>
<accession>Q9M0M5</accession>
<accession>F4JNF6</accession>
<accession>O23566</accession>
<accession>Q8W584</accession>
<accession>Q9XE57</accession>
<reference key="1">
    <citation type="journal article" date="1998" name="Nature">
        <title>Analysis of 1.9 Mb of contiguous sequence from chromosome 4 of Arabidopsis thaliana.</title>
        <authorList>
            <person name="Bevan M."/>
            <person name="Bancroft I."/>
            <person name="Bent E."/>
            <person name="Love K."/>
            <person name="Goodman H.M."/>
            <person name="Dean C."/>
            <person name="Bergkamp R."/>
            <person name="Dirkse W."/>
            <person name="van Staveren M."/>
            <person name="Stiekema W."/>
            <person name="Drost L."/>
            <person name="Ridley P."/>
            <person name="Hudson S.-A."/>
            <person name="Patel K."/>
            <person name="Murphy G."/>
            <person name="Piffanelli P."/>
            <person name="Wedler H."/>
            <person name="Wedler E."/>
            <person name="Wambutt R."/>
            <person name="Weitzenegger T."/>
            <person name="Pohl T."/>
            <person name="Terryn N."/>
            <person name="Gielen J."/>
            <person name="Villarroel R."/>
            <person name="De Clercq R."/>
            <person name="van Montagu M."/>
            <person name="Lecharny A."/>
            <person name="Aubourg S."/>
            <person name="Gy I."/>
            <person name="Kreis M."/>
            <person name="Lao N."/>
            <person name="Kavanagh T."/>
            <person name="Hempel S."/>
            <person name="Kotter P."/>
            <person name="Entian K.-D."/>
            <person name="Rieger M."/>
            <person name="Schaefer M."/>
            <person name="Funk B."/>
            <person name="Mueller-Auer S."/>
            <person name="Silvey M."/>
            <person name="James R."/>
            <person name="Monfort A."/>
            <person name="Pons A."/>
            <person name="Puigdomenech P."/>
            <person name="Douka A."/>
            <person name="Voukelatou E."/>
            <person name="Milioni D."/>
            <person name="Hatzopoulos P."/>
            <person name="Piravandi E."/>
            <person name="Obermaier B."/>
            <person name="Hilbert H."/>
            <person name="Duesterhoeft A."/>
            <person name="Moores T."/>
            <person name="Jones J.D.G."/>
            <person name="Eneva T."/>
            <person name="Palme K."/>
            <person name="Benes V."/>
            <person name="Rechmann S."/>
            <person name="Ansorge W."/>
            <person name="Cooke R."/>
            <person name="Berger C."/>
            <person name="Delseny M."/>
            <person name="Voet M."/>
            <person name="Volckaert G."/>
            <person name="Mewes H.-W."/>
            <person name="Klosterman S."/>
            <person name="Schueller C."/>
            <person name="Chalwatzis N."/>
        </authorList>
    </citation>
    <scope>NUCLEOTIDE SEQUENCE [LARGE SCALE GENOMIC DNA]</scope>
    <source>
        <strain>cv. Columbia</strain>
    </source>
</reference>
<reference key="2">
    <citation type="journal article" date="1999" name="Nature">
        <title>Sequence and analysis of chromosome 4 of the plant Arabidopsis thaliana.</title>
        <authorList>
            <person name="Mayer K.F.X."/>
            <person name="Schueller C."/>
            <person name="Wambutt R."/>
            <person name="Murphy G."/>
            <person name="Volckaert G."/>
            <person name="Pohl T."/>
            <person name="Duesterhoeft A."/>
            <person name="Stiekema W."/>
            <person name="Entian K.-D."/>
            <person name="Terryn N."/>
            <person name="Harris B."/>
            <person name="Ansorge W."/>
            <person name="Brandt P."/>
            <person name="Grivell L.A."/>
            <person name="Rieger M."/>
            <person name="Weichselgartner M."/>
            <person name="de Simone V."/>
            <person name="Obermaier B."/>
            <person name="Mache R."/>
            <person name="Mueller M."/>
            <person name="Kreis M."/>
            <person name="Delseny M."/>
            <person name="Puigdomenech P."/>
            <person name="Watson M."/>
            <person name="Schmidtheini T."/>
            <person name="Reichert B."/>
            <person name="Portetelle D."/>
            <person name="Perez-Alonso M."/>
            <person name="Boutry M."/>
            <person name="Bancroft I."/>
            <person name="Vos P."/>
            <person name="Hoheisel J."/>
            <person name="Zimmermann W."/>
            <person name="Wedler H."/>
            <person name="Ridley P."/>
            <person name="Langham S.-A."/>
            <person name="McCullagh B."/>
            <person name="Bilham L."/>
            <person name="Robben J."/>
            <person name="van der Schueren J."/>
            <person name="Grymonprez B."/>
            <person name="Chuang Y.-J."/>
            <person name="Vandenbussche F."/>
            <person name="Braeken M."/>
            <person name="Weltjens I."/>
            <person name="Voet M."/>
            <person name="Bastiaens I."/>
            <person name="Aert R."/>
            <person name="Defoor E."/>
            <person name="Weitzenegger T."/>
            <person name="Bothe G."/>
            <person name="Ramsperger U."/>
            <person name="Hilbert H."/>
            <person name="Braun M."/>
            <person name="Holzer E."/>
            <person name="Brandt A."/>
            <person name="Peters S."/>
            <person name="van Staveren M."/>
            <person name="Dirkse W."/>
            <person name="Mooijman P."/>
            <person name="Klein Lankhorst R."/>
            <person name="Rose M."/>
            <person name="Hauf J."/>
            <person name="Koetter P."/>
            <person name="Berneiser S."/>
            <person name="Hempel S."/>
            <person name="Feldpausch M."/>
            <person name="Lamberth S."/>
            <person name="Van den Daele H."/>
            <person name="De Keyser A."/>
            <person name="Buysshaert C."/>
            <person name="Gielen J."/>
            <person name="Villarroel R."/>
            <person name="De Clercq R."/>
            <person name="van Montagu M."/>
            <person name="Rogers J."/>
            <person name="Cronin A."/>
            <person name="Quail M.A."/>
            <person name="Bray-Allen S."/>
            <person name="Clark L."/>
            <person name="Doggett J."/>
            <person name="Hall S."/>
            <person name="Kay M."/>
            <person name="Lennard N."/>
            <person name="McLay K."/>
            <person name="Mayes R."/>
            <person name="Pettett A."/>
            <person name="Rajandream M.A."/>
            <person name="Lyne M."/>
            <person name="Benes V."/>
            <person name="Rechmann S."/>
            <person name="Borkova D."/>
            <person name="Bloecker H."/>
            <person name="Scharfe M."/>
            <person name="Grimm M."/>
            <person name="Loehnert T.-H."/>
            <person name="Dose S."/>
            <person name="de Haan M."/>
            <person name="Maarse A.C."/>
            <person name="Schaefer M."/>
            <person name="Mueller-Auer S."/>
            <person name="Gabel C."/>
            <person name="Fuchs M."/>
            <person name="Fartmann B."/>
            <person name="Granderath K."/>
            <person name="Dauner D."/>
            <person name="Herzl A."/>
            <person name="Neumann S."/>
            <person name="Argiriou A."/>
            <person name="Vitale D."/>
            <person name="Liguori R."/>
            <person name="Piravandi E."/>
            <person name="Massenet O."/>
            <person name="Quigley F."/>
            <person name="Clabauld G."/>
            <person name="Muendlein A."/>
            <person name="Felber R."/>
            <person name="Schnabl S."/>
            <person name="Hiller R."/>
            <person name="Schmidt W."/>
            <person name="Lecharny A."/>
            <person name="Aubourg S."/>
            <person name="Chefdor F."/>
            <person name="Cooke R."/>
            <person name="Berger C."/>
            <person name="Monfort A."/>
            <person name="Casacuberta E."/>
            <person name="Gibbons T."/>
            <person name="Weber N."/>
            <person name="Vandenbol M."/>
            <person name="Bargues M."/>
            <person name="Terol J."/>
            <person name="Torres A."/>
            <person name="Perez-Perez A."/>
            <person name="Purnelle B."/>
            <person name="Bent E."/>
            <person name="Johnson S."/>
            <person name="Tacon D."/>
            <person name="Jesse T."/>
            <person name="Heijnen L."/>
            <person name="Schwarz S."/>
            <person name="Scholler P."/>
            <person name="Heber S."/>
            <person name="Francs P."/>
            <person name="Bielke C."/>
            <person name="Frishman D."/>
            <person name="Haase D."/>
            <person name="Lemcke K."/>
            <person name="Mewes H.-W."/>
            <person name="Stocker S."/>
            <person name="Zaccaria P."/>
            <person name="Bevan M."/>
            <person name="Wilson R.K."/>
            <person name="de la Bastide M."/>
            <person name="Habermann K."/>
            <person name="Parnell L."/>
            <person name="Dedhia N."/>
            <person name="Gnoj L."/>
            <person name="Schutz K."/>
            <person name="Huang E."/>
            <person name="Spiegel L."/>
            <person name="Sekhon M."/>
            <person name="Murray J."/>
            <person name="Sheet P."/>
            <person name="Cordes M."/>
            <person name="Abu-Threideh J."/>
            <person name="Stoneking T."/>
            <person name="Kalicki J."/>
            <person name="Graves T."/>
            <person name="Harmon G."/>
            <person name="Edwards J."/>
            <person name="Latreille P."/>
            <person name="Courtney L."/>
            <person name="Cloud J."/>
            <person name="Abbott A."/>
            <person name="Scott K."/>
            <person name="Johnson D."/>
            <person name="Minx P."/>
            <person name="Bentley D."/>
            <person name="Fulton B."/>
            <person name="Miller N."/>
            <person name="Greco T."/>
            <person name="Kemp K."/>
            <person name="Kramer J."/>
            <person name="Fulton L."/>
            <person name="Mardis E."/>
            <person name="Dante M."/>
            <person name="Pepin K."/>
            <person name="Hillier L.W."/>
            <person name="Nelson J."/>
            <person name="Spieth J."/>
            <person name="Ryan E."/>
            <person name="Andrews S."/>
            <person name="Geisel C."/>
            <person name="Layman D."/>
            <person name="Du H."/>
            <person name="Ali J."/>
            <person name="Berghoff A."/>
            <person name="Jones K."/>
            <person name="Drone K."/>
            <person name="Cotton M."/>
            <person name="Joshu C."/>
            <person name="Antonoiu B."/>
            <person name="Zidanic M."/>
            <person name="Strong C."/>
            <person name="Sun H."/>
            <person name="Lamar B."/>
            <person name="Yordan C."/>
            <person name="Ma P."/>
            <person name="Zhong J."/>
            <person name="Preston R."/>
            <person name="Vil D."/>
            <person name="Shekher M."/>
            <person name="Matero A."/>
            <person name="Shah R."/>
            <person name="Swaby I.K."/>
            <person name="O'Shaughnessy A."/>
            <person name="Rodriguez M."/>
            <person name="Hoffman J."/>
            <person name="Till S."/>
            <person name="Granat S."/>
            <person name="Shohdy N."/>
            <person name="Hasegawa A."/>
            <person name="Hameed A."/>
            <person name="Lodhi M."/>
            <person name="Johnson A."/>
            <person name="Chen E."/>
            <person name="Marra M.A."/>
            <person name="Martienssen R."/>
            <person name="McCombie W.R."/>
        </authorList>
    </citation>
    <scope>NUCLEOTIDE SEQUENCE [LARGE SCALE GENOMIC DNA]</scope>
    <source>
        <strain>cv. Columbia</strain>
    </source>
</reference>
<reference key="3">
    <citation type="journal article" date="2017" name="Plant J.">
        <title>Araport11: a complete reannotation of the Arabidopsis thaliana reference genome.</title>
        <authorList>
            <person name="Cheng C.Y."/>
            <person name="Krishnakumar V."/>
            <person name="Chan A.P."/>
            <person name="Thibaud-Nissen F."/>
            <person name="Schobel S."/>
            <person name="Town C.D."/>
        </authorList>
    </citation>
    <scope>GENOME REANNOTATION</scope>
    <scope>SEQUENCE REVISION</scope>
    <source>
        <strain>cv. Columbia</strain>
    </source>
</reference>
<reference key="4">
    <citation type="journal article" date="2003" name="Science">
        <title>Empirical analysis of transcriptional activity in the Arabidopsis genome.</title>
        <authorList>
            <person name="Yamada K."/>
            <person name="Lim J."/>
            <person name="Dale J.M."/>
            <person name="Chen H."/>
            <person name="Shinn P."/>
            <person name="Palm C.J."/>
            <person name="Southwick A.M."/>
            <person name="Wu H.C."/>
            <person name="Kim C.J."/>
            <person name="Nguyen M."/>
            <person name="Pham P.K."/>
            <person name="Cheuk R.F."/>
            <person name="Karlin-Newmann G."/>
            <person name="Liu S.X."/>
            <person name="Lam B."/>
            <person name="Sakano H."/>
            <person name="Wu T."/>
            <person name="Yu G."/>
            <person name="Miranda M."/>
            <person name="Quach H.L."/>
            <person name="Tripp M."/>
            <person name="Chang C.H."/>
            <person name="Lee J.M."/>
            <person name="Toriumi M.J."/>
            <person name="Chan M.M."/>
            <person name="Tang C.C."/>
            <person name="Onodera C.S."/>
            <person name="Deng J.M."/>
            <person name="Akiyama K."/>
            <person name="Ansari Y."/>
            <person name="Arakawa T."/>
            <person name="Banh J."/>
            <person name="Banno F."/>
            <person name="Bowser L."/>
            <person name="Brooks S.Y."/>
            <person name="Carninci P."/>
            <person name="Chao Q."/>
            <person name="Choy N."/>
            <person name="Enju A."/>
            <person name="Goldsmith A.D."/>
            <person name="Gurjal M."/>
            <person name="Hansen N.F."/>
            <person name="Hayashizaki Y."/>
            <person name="Johnson-Hopson C."/>
            <person name="Hsuan V.W."/>
            <person name="Iida K."/>
            <person name="Karnes M."/>
            <person name="Khan S."/>
            <person name="Koesema E."/>
            <person name="Ishida J."/>
            <person name="Jiang P.X."/>
            <person name="Jones T."/>
            <person name="Kawai J."/>
            <person name="Kamiya A."/>
            <person name="Meyers C."/>
            <person name="Nakajima M."/>
            <person name="Narusaka M."/>
            <person name="Seki M."/>
            <person name="Sakurai T."/>
            <person name="Satou M."/>
            <person name="Tamse R."/>
            <person name="Vaysberg M."/>
            <person name="Wallender E.K."/>
            <person name="Wong C."/>
            <person name="Yamamura Y."/>
            <person name="Yuan S."/>
            <person name="Shinozaki K."/>
            <person name="Davis R.W."/>
            <person name="Theologis A."/>
            <person name="Ecker J.R."/>
        </authorList>
    </citation>
    <scope>NUCLEOTIDE SEQUENCE [LARGE SCALE MRNA]</scope>
    <source>
        <strain>cv. Columbia</strain>
    </source>
</reference>
<reference key="5">
    <citation type="submission" date="2006-07" db="EMBL/GenBank/DDBJ databases">
        <title>Large-scale analysis of RIKEN Arabidopsis full-length (RAFL) cDNAs.</title>
        <authorList>
            <person name="Totoki Y."/>
            <person name="Seki M."/>
            <person name="Ishida J."/>
            <person name="Nakajima M."/>
            <person name="Enju A."/>
            <person name="Kamiya A."/>
            <person name="Narusaka M."/>
            <person name="Shin-i T."/>
            <person name="Nakagawa M."/>
            <person name="Sakamoto N."/>
            <person name="Oishi K."/>
            <person name="Kohara Y."/>
            <person name="Kobayashi M."/>
            <person name="Toyoda A."/>
            <person name="Sakaki Y."/>
            <person name="Sakurai T."/>
            <person name="Iida K."/>
            <person name="Akiyama K."/>
            <person name="Satou M."/>
            <person name="Toyoda T."/>
            <person name="Konagaya A."/>
            <person name="Carninci P."/>
            <person name="Kawai J."/>
            <person name="Hayashizaki Y."/>
            <person name="Shinozaki K."/>
        </authorList>
    </citation>
    <scope>NUCLEOTIDE SEQUENCE [LARGE SCALE MRNA]</scope>
    <source>
        <strain>cv. Columbia</strain>
    </source>
</reference>
<reference key="6">
    <citation type="journal article" date="1999" name="Plant J.">
        <title>The GRAS gene family in Arabidopsis: sequence characterization and basic expression analysis of the SCARECROW-LIKE genes.</title>
        <authorList>
            <person name="Pysh L.D."/>
            <person name="Wysocka-Diller J.W."/>
            <person name="Camilleri C."/>
            <person name="Bouchez D."/>
            <person name="Benfey P.N."/>
        </authorList>
    </citation>
    <scope>NUCLEOTIDE SEQUENCE [MRNA] OF 249-529</scope>
    <scope>TISSUE SPECIFICITY</scope>
</reference>
<reference key="7">
    <citation type="journal article" date="2006" name="Mol. Genet. Genomics">
        <title>The GRAS protein SCL13 is a positive regulator of phytochrome-dependent red light signaling, but can also modulate phytochrome A responses.</title>
        <authorList>
            <person name="Torres-Galea P."/>
            <person name="Huang L.-F."/>
            <person name="Chua N.-H."/>
            <person name="Bolle C."/>
        </authorList>
    </citation>
    <scope>FUNCTION</scope>
    <scope>SUBCELLULAR LOCATION</scope>
    <scope>TISSUE SPECIFICITY</scope>
    <scope>DEVELOPMENTAL STAGE</scope>
    <scope>INDUCTION</scope>
</reference>
<reference key="8">
    <citation type="journal article" date="2004" name="Plant Mol. Biol.">
        <title>Genome-wide analysis of the GRAS gene family in rice and Arabidopsis.</title>
        <authorList>
            <person name="Tian C."/>
            <person name="Wan P."/>
            <person name="Sun S."/>
            <person name="Li J."/>
            <person name="Chen M."/>
        </authorList>
    </citation>
    <scope>GENE FAMILY</scope>
</reference>
<reference key="9">
    <citation type="journal article" date="2008" name="Plant Mol. Biol.">
        <title>Large-scale analysis of the GRAS gene family in Arabidopsis thaliana.</title>
        <authorList>
            <person name="Lee M.-H."/>
            <person name="Kim B."/>
            <person name="Song S.-K."/>
            <person name="Heo J.-O."/>
            <person name="Yu N.-I."/>
            <person name="Lee S.A."/>
            <person name="Kim M."/>
            <person name="Kim D.G."/>
            <person name="Sohn S.O."/>
            <person name="Lim C.E."/>
            <person name="Chang K.S."/>
            <person name="Lee M.M."/>
            <person name="Lim J."/>
        </authorList>
    </citation>
    <scope>GENE FAMILY</scope>
    <scope>TISSUE SPECIFICITY</scope>
</reference>
<evidence type="ECO:0000255" key="1">
    <source>
        <dbReference type="PROSITE-ProRule" id="PRU01191"/>
    </source>
</evidence>
<evidence type="ECO:0000256" key="2">
    <source>
        <dbReference type="SAM" id="MobiDB-lite"/>
    </source>
</evidence>
<evidence type="ECO:0000269" key="3">
    <source>
    </source>
</evidence>
<evidence type="ECO:0000269" key="4">
    <source>
    </source>
</evidence>
<evidence type="ECO:0000269" key="5">
    <source>
    </source>
</evidence>
<evidence type="ECO:0000305" key="6"/>
<sequence>MQTSQKHHSAAGLHMLYPQVYCSPQFQAKDNKGFSDIPSKENFFTLESSTASGSLPSYDSPSVSITSGRSPFSPQGSQSCISDLHHSPDNVYGSPLSGVSSLAYDEAGVKSKIRELEVSLLSGDTKVEEFSGFSPAAGKSWNWDELLALTPQLDLKEVLVEAARAVADGDFATAYGFLDVLEQMVSVSGSPIQRLGTYMAEGLRARLEGSGSNIYKSLKCNEPTGRELMSYMSVLYEICPYWKFAYTTANVEILEAIAGETRVHIIDFQIAQGSQYMFLIQELAKRPGGPPLLRVTGVDDSQSTYARGGGLSLVGERLATLAQSCGVPFEFHDAIMSGCKVQREHLGLEPGFAVVVNFPYVLHHMPDESVSVENHRDRLLHLIKSLSPKLVTLVEQESNTNTSPFLSRFVETLDYYTAMFESIDAARPRDDKQRISAEQHCVARDIVNMIACEESERVERHEVLGKWRVRMMMAGFTGWPVSTSAAFAASEMLKAYDKNYKLGGHEGALYLFWKRRPMATCSVWKPNPN</sequence>
<keyword id="KW-0963">Cytoplasm</keyword>
<keyword id="KW-0539">Nucleus</keyword>
<keyword id="KW-1185">Reference proteome</keyword>
<keyword id="KW-0804">Transcription</keyword>
<keyword id="KW-0805">Transcription regulation</keyword>
<name>SCL13_ARATH</name>